<comment type="function">
    <text evidence="4">Catalyzes the formation of phosphoribosylamine from phosphoribosylpyrophosphate (PRPP) and glutamine.</text>
</comment>
<comment type="catalytic activity">
    <reaction evidence="4">
        <text>5-phospho-beta-D-ribosylamine + L-glutamate + diphosphate = 5-phospho-alpha-D-ribose 1-diphosphate + L-glutamine + H2O</text>
        <dbReference type="Rhea" id="RHEA:14905"/>
        <dbReference type="ChEBI" id="CHEBI:15377"/>
        <dbReference type="ChEBI" id="CHEBI:29985"/>
        <dbReference type="ChEBI" id="CHEBI:33019"/>
        <dbReference type="ChEBI" id="CHEBI:58017"/>
        <dbReference type="ChEBI" id="CHEBI:58359"/>
        <dbReference type="ChEBI" id="CHEBI:58681"/>
        <dbReference type="EC" id="2.4.2.14"/>
    </reaction>
    <physiologicalReaction direction="right-to-left" evidence="7">
        <dbReference type="Rhea" id="RHEA:14907"/>
    </physiologicalReaction>
</comment>
<comment type="cofactor">
    <cofactor evidence="1">
        <name>Mg(2+)</name>
        <dbReference type="ChEBI" id="CHEBI:18420"/>
    </cofactor>
    <text evidence="1">Binds 1 Mg(2+) ion per subunit.</text>
</comment>
<comment type="cofactor">
    <cofactor evidence="1">
        <name>[4Fe-4S] cluster</name>
        <dbReference type="ChEBI" id="CHEBI:49883"/>
    </cofactor>
    <text evidence="1">Binds 1 [4Fe-4S] cluster per subunit.</text>
</comment>
<comment type="activity regulation">
    <text>Activated by the substrate 5-phospho-alpha-D-ribosyl-1-pyrophosphate and inhibited by the purine ribonucleotides, the end products of purine biosynthesis.</text>
</comment>
<comment type="pathway">
    <text evidence="4">Purine metabolism; IMP biosynthesis via de novo pathway; N(1)-(5-phospho-D-ribosyl)glycinamide from 5-phospho-alpha-D-ribose 1-diphosphate: step 1/2.</text>
</comment>
<comment type="subunit">
    <text evidence="1">Homotetramer.</text>
</comment>
<comment type="tissue specificity">
    <text evidence="4">Expressed at a high level in brain, heart, liver and stomach.</text>
</comment>
<comment type="similarity">
    <text evidence="6">In the C-terminal section; belongs to the purine/pyrimidine phosphoribosyltransferase family.</text>
</comment>
<accession>P35433</accession>
<feature type="propeptide" id="PRO_0000029285" evidence="4">
    <location>
        <begin position="1"/>
        <end position="11"/>
    </location>
</feature>
<feature type="chain" id="PRO_0000029286" description="Amidophosphoribosyltransferase">
    <location>
        <begin position="12"/>
        <end position="517"/>
    </location>
</feature>
<feature type="domain" description="Glutamine amidotransferase type-2" evidence="3">
    <location>
        <begin position="12"/>
        <end position="261"/>
    </location>
</feature>
<feature type="active site" description="Nucleophile" evidence="3">
    <location>
        <position position="12"/>
    </location>
</feature>
<feature type="binding site" evidence="1">
    <location>
        <position position="280"/>
    </location>
    <ligand>
        <name>[4Fe-4S] cluster</name>
        <dbReference type="ChEBI" id="CHEBI:49883"/>
    </ligand>
</feature>
<feature type="binding site" evidence="1">
    <location>
        <position position="327"/>
    </location>
    <ligand>
        <name>Mg(2+)</name>
        <dbReference type="ChEBI" id="CHEBI:18420"/>
    </ligand>
</feature>
<feature type="binding site" evidence="1">
    <location>
        <position position="389"/>
    </location>
    <ligand>
        <name>Mg(2+)</name>
        <dbReference type="ChEBI" id="CHEBI:18420"/>
    </ligand>
</feature>
<feature type="binding site" evidence="1">
    <location>
        <position position="390"/>
    </location>
    <ligand>
        <name>Mg(2+)</name>
        <dbReference type="ChEBI" id="CHEBI:18420"/>
    </ligand>
</feature>
<feature type="binding site" evidence="1">
    <location>
        <position position="426"/>
    </location>
    <ligand>
        <name>[4Fe-4S] cluster</name>
        <dbReference type="ChEBI" id="CHEBI:49883"/>
    </ligand>
</feature>
<feature type="binding site" evidence="1">
    <location>
        <position position="503"/>
    </location>
    <ligand>
        <name>[4Fe-4S] cluster</name>
        <dbReference type="ChEBI" id="CHEBI:49883"/>
    </ligand>
</feature>
<feature type="binding site" evidence="1">
    <location>
        <position position="506"/>
    </location>
    <ligand>
        <name>[4Fe-4S] cluster</name>
        <dbReference type="ChEBI" id="CHEBI:49883"/>
    </ligand>
</feature>
<feature type="modified residue" description="N-acetylmethionine" evidence="2">
    <location>
        <position position="1"/>
    </location>
</feature>
<sequence length="517" mass="57437">MELEESGIREECGVFGCIASGDWPTQLDVPHVITLGLVGLQHRGQESAGIVTSDGSSVPKFRVHKGMGLVNHVFTEDNLKKLYVSNLGIGHTRYATTGKCELENCQPFVVETLHGKIAVAHNGELVNAARLRKKLLRHGIGLSTSSDSEMITQLLAYTPPQEQDDTPDWVARIKNLMKEAPAAYSLVIMHRDVIYAVRDPYGNRPLCIGRLMPVSDINDKEKKSSETEGWVVSSESCSFLSIGARYCHEVKPGEIVEISRHGVRTLDIIPRSNGDPVAFCIFEYVYFARPDSMFEDQMVYTVRYRCGQQLAVEAPVEADLVSTVPESATPAALGYATKCGLPYVEVLCKNRYVGRTFIQPNMRLRQLGVAKKFGVLSDNFKGKRIVLIDDSIVRGNTISPIIKLLKESGAKEVHIRVASPPIKHPCFMGINIPTKEELIANKPEFEYLAEYLGANSVVYLSVEGLVSSVQQEIKFKKQKVKKRDITIQENGNGLEYFEKTGHCTACLTGQYPVDLEW</sequence>
<organism>
    <name type="scientific">Rattus norvegicus</name>
    <name type="common">Rat</name>
    <dbReference type="NCBI Taxonomy" id="10116"/>
    <lineage>
        <taxon>Eukaryota</taxon>
        <taxon>Metazoa</taxon>
        <taxon>Chordata</taxon>
        <taxon>Craniata</taxon>
        <taxon>Vertebrata</taxon>
        <taxon>Euteleostomi</taxon>
        <taxon>Mammalia</taxon>
        <taxon>Eutheria</taxon>
        <taxon>Euarchontoglires</taxon>
        <taxon>Glires</taxon>
        <taxon>Rodentia</taxon>
        <taxon>Myomorpha</taxon>
        <taxon>Muroidea</taxon>
        <taxon>Muridae</taxon>
        <taxon>Murinae</taxon>
        <taxon>Rattus</taxon>
    </lineage>
</organism>
<keyword id="KW-0004">4Fe-4S</keyword>
<keyword id="KW-0007">Acetylation</keyword>
<keyword id="KW-0021">Allosteric enzyme</keyword>
<keyword id="KW-0903">Direct protein sequencing</keyword>
<keyword id="KW-0315">Glutamine amidotransferase</keyword>
<keyword id="KW-0328">Glycosyltransferase</keyword>
<keyword id="KW-0408">Iron</keyword>
<keyword id="KW-0411">Iron-sulfur</keyword>
<keyword id="KW-0460">Magnesium</keyword>
<keyword id="KW-0479">Metal-binding</keyword>
<keyword id="KW-0658">Purine biosynthesis</keyword>
<keyword id="KW-1185">Reference proteome</keyword>
<keyword id="KW-0808">Transferase</keyword>
<proteinExistence type="evidence at protein level"/>
<gene>
    <name type="primary">Ppat</name>
</gene>
<dbReference type="EC" id="2.4.2.14" evidence="4"/>
<dbReference type="EMBL" id="D10853">
    <property type="protein sequence ID" value="BAA01626.1"/>
    <property type="molecule type" value="mRNA"/>
</dbReference>
<dbReference type="EMBL" id="BC086999">
    <property type="protein sequence ID" value="AAH86999.1"/>
    <property type="molecule type" value="mRNA"/>
</dbReference>
<dbReference type="EMBL" id="D37978">
    <property type="protein sequence ID" value="BAA21036.1"/>
    <property type="molecule type" value="Genomic_DNA"/>
</dbReference>
<dbReference type="PIR" id="A46088">
    <property type="entry name" value="A46088"/>
</dbReference>
<dbReference type="RefSeq" id="NP_476546.1">
    <property type="nucleotide sequence ID" value="NM_057198.2"/>
</dbReference>
<dbReference type="SMR" id="P35433"/>
<dbReference type="FunCoup" id="P35433">
    <property type="interactions" value="1210"/>
</dbReference>
<dbReference type="STRING" id="10116.ENSRNOP00000002905"/>
<dbReference type="MEROPS" id="C44.001"/>
<dbReference type="GlyGen" id="P35433">
    <property type="glycosylation" value="1 site"/>
</dbReference>
<dbReference type="iPTMnet" id="P35433"/>
<dbReference type="PhosphoSitePlus" id="P35433"/>
<dbReference type="jPOST" id="P35433"/>
<dbReference type="PaxDb" id="10116-ENSRNOP00000002905"/>
<dbReference type="Ensembl" id="ENSRNOT00000002905.4">
    <property type="protein sequence ID" value="ENSRNOP00000002905.2"/>
    <property type="gene ID" value="ENSRNOG00000002128.4"/>
</dbReference>
<dbReference type="GeneID" id="117544"/>
<dbReference type="KEGG" id="rno:117544"/>
<dbReference type="UCSC" id="RGD:620237">
    <property type="organism name" value="rat"/>
</dbReference>
<dbReference type="AGR" id="RGD:620237"/>
<dbReference type="CTD" id="5471"/>
<dbReference type="RGD" id="620237">
    <property type="gene designation" value="Ppat"/>
</dbReference>
<dbReference type="eggNOG" id="KOG0572">
    <property type="taxonomic scope" value="Eukaryota"/>
</dbReference>
<dbReference type="GeneTree" id="ENSGT00390000003428"/>
<dbReference type="HOGENOM" id="CLU_022389_3_1_1"/>
<dbReference type="InParanoid" id="P35433"/>
<dbReference type="PhylomeDB" id="P35433"/>
<dbReference type="TreeFam" id="TF106370"/>
<dbReference type="Reactome" id="R-RNO-73817">
    <property type="pathway name" value="Purine ribonucleoside monophosphate biosynthesis"/>
</dbReference>
<dbReference type="SABIO-RK" id="P35433"/>
<dbReference type="UniPathway" id="UPA00074">
    <property type="reaction ID" value="UER00124"/>
</dbReference>
<dbReference type="PRO" id="PR:P35433"/>
<dbReference type="Proteomes" id="UP000002494">
    <property type="component" value="Chromosome 14"/>
</dbReference>
<dbReference type="Bgee" id="ENSRNOG00000002128">
    <property type="expression patterns" value="Expressed in quadriceps femoris and 20 other cell types or tissues"/>
</dbReference>
<dbReference type="GO" id="GO:0051539">
    <property type="term" value="F:4 iron, 4 sulfur cluster binding"/>
    <property type="evidence" value="ECO:0007669"/>
    <property type="project" value="UniProtKB-KW"/>
</dbReference>
<dbReference type="GO" id="GO:0004044">
    <property type="term" value="F:amidophosphoribosyltransferase activity"/>
    <property type="evidence" value="ECO:0000314"/>
    <property type="project" value="RGD"/>
</dbReference>
<dbReference type="GO" id="GO:0042802">
    <property type="term" value="F:identical protein binding"/>
    <property type="evidence" value="ECO:0000353"/>
    <property type="project" value="RGD"/>
</dbReference>
<dbReference type="GO" id="GO:0046872">
    <property type="term" value="F:metal ion binding"/>
    <property type="evidence" value="ECO:0007669"/>
    <property type="project" value="UniProtKB-KW"/>
</dbReference>
<dbReference type="GO" id="GO:0044208">
    <property type="term" value="P:'de novo' AMP biosynthetic process"/>
    <property type="evidence" value="ECO:0000266"/>
    <property type="project" value="RGD"/>
</dbReference>
<dbReference type="GO" id="GO:0006189">
    <property type="term" value="P:'de novo' IMP biosynthetic process"/>
    <property type="evidence" value="ECO:0000266"/>
    <property type="project" value="RGD"/>
</dbReference>
<dbReference type="GO" id="GO:0097294">
    <property type="term" value="P:'de novo' XMP biosynthetic process"/>
    <property type="evidence" value="ECO:0000266"/>
    <property type="project" value="RGD"/>
</dbReference>
<dbReference type="GO" id="GO:0031100">
    <property type="term" value="P:animal organ regeneration"/>
    <property type="evidence" value="ECO:0000270"/>
    <property type="project" value="RGD"/>
</dbReference>
<dbReference type="GO" id="GO:0032869">
    <property type="term" value="P:cellular response to insulin stimulus"/>
    <property type="evidence" value="ECO:0000270"/>
    <property type="project" value="RGD"/>
</dbReference>
<dbReference type="GO" id="GO:0071466">
    <property type="term" value="P:cellular response to xenobiotic stimulus"/>
    <property type="evidence" value="ECO:0000270"/>
    <property type="project" value="RGD"/>
</dbReference>
<dbReference type="GO" id="GO:0000082">
    <property type="term" value="P:G1/S transition of mitotic cell cycle"/>
    <property type="evidence" value="ECO:0000270"/>
    <property type="project" value="RGD"/>
</dbReference>
<dbReference type="GO" id="GO:0006543">
    <property type="term" value="P:glutamine catabolic process"/>
    <property type="evidence" value="ECO:0000314"/>
    <property type="project" value="RGD"/>
</dbReference>
<dbReference type="GO" id="GO:0006177">
    <property type="term" value="P:GMP biosynthetic process"/>
    <property type="evidence" value="ECO:0000266"/>
    <property type="project" value="RGD"/>
</dbReference>
<dbReference type="GO" id="GO:0001822">
    <property type="term" value="P:kidney development"/>
    <property type="evidence" value="ECO:0000270"/>
    <property type="project" value="RGD"/>
</dbReference>
<dbReference type="GO" id="GO:0007595">
    <property type="term" value="P:lactation"/>
    <property type="evidence" value="ECO:0000270"/>
    <property type="project" value="RGD"/>
</dbReference>
<dbReference type="GO" id="GO:0060135">
    <property type="term" value="P:maternal process involved in female pregnancy"/>
    <property type="evidence" value="ECO:0000270"/>
    <property type="project" value="RGD"/>
</dbReference>
<dbReference type="GO" id="GO:0009113">
    <property type="term" value="P:purine nucleobase biosynthetic process"/>
    <property type="evidence" value="ECO:0007669"/>
    <property type="project" value="InterPro"/>
</dbReference>
<dbReference type="GO" id="GO:0006164">
    <property type="term" value="P:purine nucleotide biosynthetic process"/>
    <property type="evidence" value="ECO:0000318"/>
    <property type="project" value="GO_Central"/>
</dbReference>
<dbReference type="GO" id="GO:0009410">
    <property type="term" value="P:response to xenobiotic stimulus"/>
    <property type="evidence" value="ECO:0000270"/>
    <property type="project" value="RGD"/>
</dbReference>
<dbReference type="CDD" id="cd00715">
    <property type="entry name" value="GPATase_N"/>
    <property type="match status" value="1"/>
</dbReference>
<dbReference type="CDD" id="cd06223">
    <property type="entry name" value="PRTases_typeI"/>
    <property type="match status" value="1"/>
</dbReference>
<dbReference type="FunFam" id="3.60.20.10:FF:000047">
    <property type="entry name" value="Amidophosphoribosyltransferase"/>
    <property type="match status" value="1"/>
</dbReference>
<dbReference type="Gene3D" id="3.40.50.2020">
    <property type="match status" value="1"/>
</dbReference>
<dbReference type="Gene3D" id="3.60.20.10">
    <property type="entry name" value="Glutamine Phosphoribosylpyrophosphate, subunit 1, domain 1"/>
    <property type="match status" value="1"/>
</dbReference>
<dbReference type="HAMAP" id="MF_01931">
    <property type="entry name" value="PurF"/>
    <property type="match status" value="1"/>
</dbReference>
<dbReference type="InterPro" id="IPR017932">
    <property type="entry name" value="GATase_2_dom"/>
</dbReference>
<dbReference type="InterPro" id="IPR029055">
    <property type="entry name" value="Ntn_hydrolases_N"/>
</dbReference>
<dbReference type="InterPro" id="IPR000836">
    <property type="entry name" value="PRibTrfase_dom"/>
</dbReference>
<dbReference type="InterPro" id="IPR029057">
    <property type="entry name" value="PRTase-like"/>
</dbReference>
<dbReference type="InterPro" id="IPR005854">
    <property type="entry name" value="PurF"/>
</dbReference>
<dbReference type="InterPro" id="IPR035584">
    <property type="entry name" value="PurF_N"/>
</dbReference>
<dbReference type="NCBIfam" id="TIGR01134">
    <property type="entry name" value="purF"/>
    <property type="match status" value="1"/>
</dbReference>
<dbReference type="PANTHER" id="PTHR11907">
    <property type="entry name" value="AMIDOPHOSPHORIBOSYLTRANSFERASE"/>
    <property type="match status" value="1"/>
</dbReference>
<dbReference type="Pfam" id="PF13522">
    <property type="entry name" value="GATase_6"/>
    <property type="match status" value="1"/>
</dbReference>
<dbReference type="PIRSF" id="PIRSF000485">
    <property type="entry name" value="Amd_phspho_trans"/>
    <property type="match status" value="1"/>
</dbReference>
<dbReference type="SUPFAM" id="SSF56235">
    <property type="entry name" value="N-terminal nucleophile aminohydrolases (Ntn hydrolases)"/>
    <property type="match status" value="1"/>
</dbReference>
<dbReference type="SUPFAM" id="SSF53271">
    <property type="entry name" value="PRTase-like"/>
    <property type="match status" value="1"/>
</dbReference>
<dbReference type="PROSITE" id="PS51278">
    <property type="entry name" value="GATASE_TYPE_2"/>
    <property type="match status" value="1"/>
</dbReference>
<dbReference type="PROSITE" id="PS00103">
    <property type="entry name" value="PUR_PYR_PR_TRANSFER"/>
    <property type="match status" value="1"/>
</dbReference>
<name>PUR1_RAT</name>
<evidence type="ECO:0000250" key="1">
    <source>
        <dbReference type="UniProtKB" id="P00497"/>
    </source>
</evidence>
<evidence type="ECO:0000250" key="2">
    <source>
        <dbReference type="UniProtKB" id="Q06203"/>
    </source>
</evidence>
<evidence type="ECO:0000255" key="3">
    <source>
        <dbReference type="PROSITE-ProRule" id="PRU00609"/>
    </source>
</evidence>
<evidence type="ECO:0000269" key="4">
    <source>
    </source>
</evidence>
<evidence type="ECO:0000303" key="5">
    <source>
    </source>
</evidence>
<evidence type="ECO:0000305" key="6"/>
<evidence type="ECO:0000305" key="7">
    <source>
    </source>
</evidence>
<protein>
    <recommendedName>
        <fullName evidence="5">Amidophosphoribosyltransferase</fullName>
        <shortName evidence="5">ATase</shortName>
        <ecNumber evidence="4">2.4.2.14</ecNumber>
    </recommendedName>
    <alternativeName>
        <fullName>Glutamine phosphoribosylpyrophosphate amidotransferase</fullName>
        <shortName>GPAT</shortName>
    </alternativeName>
</protein>
<reference key="1">
    <citation type="journal article" date="1993" name="J. Biol. Chem.">
        <title>Molecular cloning of rat amidophosphoribosyltransferase.</title>
        <authorList>
            <person name="Iwahana H."/>
            <person name="Yamaoka T."/>
            <person name="Mizutani M."/>
            <person name="Mizusawa N."/>
            <person name="Ii S."/>
            <person name="Yoshimoto K."/>
            <person name="Itakura M."/>
        </authorList>
    </citation>
    <scope>NUCLEOTIDE SEQUENCE [MRNA]</scope>
    <scope>PROTEIN SEQUENCE OF 12-29</scope>
    <scope>TISSUE SPECIFICITY</scope>
    <scope>FUNCTION</scope>
    <scope>CATALYTIC ACTIVITY</scope>
    <source>
        <strain>Wistar</strain>
        <tissue>Liver</tissue>
    </source>
</reference>
<reference key="2">
    <citation type="journal article" date="2004" name="Genome Res.">
        <title>The status, quality, and expansion of the NIH full-length cDNA project: the Mammalian Gene Collection (MGC).</title>
        <authorList>
            <consortium name="The MGC Project Team"/>
        </authorList>
    </citation>
    <scope>NUCLEOTIDE SEQUENCE [LARGE SCALE MRNA]</scope>
    <source>
        <tissue>Heart</tissue>
    </source>
</reference>
<reference key="3">
    <citation type="journal article" date="1995" name="Biochim. Biophys. Acta">
        <title>Rat genomic structure of amidophosphoribosyltransferase, cDNA sequence of aminoimidazole ribonucleotide carboxylase, and cell cycle-dependent expression of these two physically linked genes.</title>
        <authorList>
            <person name="Iwahana H."/>
            <person name="Honda S."/>
            <person name="Tsujisawa T."/>
            <person name="Takahashi Y."/>
            <person name="Adzuma K."/>
            <person name="Katashima R."/>
            <person name="Yamaoka T."/>
            <person name="Moritani M."/>
            <person name="Yoshimoto K."/>
            <person name="Itakura M."/>
        </authorList>
    </citation>
    <scope>NUCLEOTIDE SEQUENCE [GENOMIC DNA] OF 1-43</scope>
    <source>
        <strain>Wistar</strain>
        <tissue>Liver</tissue>
    </source>
</reference>